<dbReference type="EMBL" id="L28920">
    <property type="protein sequence ID" value="AAC09492.1"/>
    <property type="molecule type" value="Genomic_DNA"/>
</dbReference>
<dbReference type="PIR" id="S53482">
    <property type="entry name" value="S53482"/>
</dbReference>
<dbReference type="DIP" id="DIP-2032N"/>
<dbReference type="IntAct" id="P39550">
    <property type="interactions" value="2"/>
</dbReference>
<dbReference type="PaxDb" id="4932-YAR030C"/>
<dbReference type="EnsemblFungi" id="YAR030C_mRNA">
    <property type="protein sequence ID" value="YAR030C"/>
    <property type="gene ID" value="YAR030C"/>
</dbReference>
<dbReference type="AGR" id="SGD:S000001821"/>
<dbReference type="SGD" id="S000001821">
    <property type="gene designation" value="YAR030C"/>
</dbReference>
<dbReference type="HOGENOM" id="CLU_2135486_0_0_1"/>
<feature type="chain" id="PRO_0000202427" description="Putative uncharacterized protein YAR030C">
    <location>
        <begin position="1"/>
        <end position="113"/>
    </location>
</feature>
<evidence type="ECO:0000305" key="1"/>
<evidence type="ECO:0000305" key="2">
    <source>
    </source>
</evidence>
<sequence length="113" mass="13288">MVLRRHKLLAQQRWLRVKFSDRSGRVFTLKNRNQLSIIMPFCVLHICFPLYKVTLECNLSNLLPHFSVSGLVNPFASKVLSEYFSFLSNNCTNILPILHLRLFYNIRCLGKQF</sequence>
<protein>
    <recommendedName>
        <fullName>Putative uncharacterized protein YAR030C</fullName>
    </recommendedName>
</protein>
<reference key="1">
    <citation type="submission" date="1994-02" db="EMBL/GenBank/DDBJ databases">
        <title>Sequencing of chromosome I of Saccharomyces cerevisiae: analysis of the 52 Kbp CDC15-FLO1-PHO11-YAR074 region.</title>
        <authorList>
            <person name="Bussey H."/>
            <person name="Keng T."/>
            <person name="Storms R.K."/>
            <person name="Vo D."/>
            <person name="Zhong W."/>
            <person name="Fortin N."/>
            <person name="Barton A.B."/>
            <person name="Kaback D.B."/>
            <person name="Clark M.W."/>
        </authorList>
    </citation>
    <scope>NUCLEOTIDE SEQUENCE [GENOMIC DNA]</scope>
    <source>
        <strain>ATCC 204511 / S288c / AB972</strain>
    </source>
</reference>
<reference key="2">
    <citation type="journal article" date="1995" name="Proc. Natl. Acad. Sci. U.S.A.">
        <title>The nucleotide sequence of chromosome I from Saccharomyces cerevisiae.</title>
        <authorList>
            <person name="Bussey H."/>
            <person name="Kaback D.B."/>
            <person name="Zhong W.-W."/>
            <person name="Vo D.H."/>
            <person name="Clark M.W."/>
            <person name="Fortin N."/>
            <person name="Hall J."/>
            <person name="Ouellette B.F.F."/>
            <person name="Keng T."/>
            <person name="Barton A.B."/>
            <person name="Su Y."/>
            <person name="Davies C.J."/>
            <person name="Storms R.K."/>
        </authorList>
    </citation>
    <scope>NUCLEOTIDE SEQUENCE [LARGE SCALE GENOMIC DNA]</scope>
    <source>
        <strain>ATCC 204508 / S288c</strain>
    </source>
</reference>
<reference key="3">
    <citation type="journal article" date="2014" name="G3 (Bethesda)">
        <title>The reference genome sequence of Saccharomyces cerevisiae: Then and now.</title>
        <authorList>
            <person name="Engel S.R."/>
            <person name="Dietrich F.S."/>
            <person name="Fisk D.G."/>
            <person name="Binkley G."/>
            <person name="Balakrishnan R."/>
            <person name="Costanzo M.C."/>
            <person name="Dwight S.S."/>
            <person name="Hitz B.C."/>
            <person name="Karra K."/>
            <person name="Nash R.S."/>
            <person name="Weng S."/>
            <person name="Wong E.D."/>
            <person name="Lloyd P."/>
            <person name="Skrzypek M.S."/>
            <person name="Miyasato S.R."/>
            <person name="Simison M."/>
            <person name="Cherry J.M."/>
        </authorList>
    </citation>
    <scope>GENOME REANNOTATION</scope>
    <source>
        <strain>ATCC 204508 / S288c</strain>
    </source>
</reference>
<accession>P39550</accession>
<gene>
    <name type="ordered locus">YAR030C</name>
</gene>
<comment type="miscellaneous">
    <text evidence="1">Partially overlaps PRM9 and YAR029W.</text>
</comment>
<comment type="caution">
    <text evidence="2">Product of a dubious gene prediction unlikely to encode a functional protein. Because of that it is not part of the S.cerevisiae S288c complete/reference proteome set.</text>
</comment>
<organism>
    <name type="scientific">Saccharomyces cerevisiae (strain ATCC 204508 / S288c)</name>
    <name type="common">Baker's yeast</name>
    <dbReference type="NCBI Taxonomy" id="559292"/>
    <lineage>
        <taxon>Eukaryota</taxon>
        <taxon>Fungi</taxon>
        <taxon>Dikarya</taxon>
        <taxon>Ascomycota</taxon>
        <taxon>Saccharomycotina</taxon>
        <taxon>Saccharomycetes</taxon>
        <taxon>Saccharomycetales</taxon>
        <taxon>Saccharomycetaceae</taxon>
        <taxon>Saccharomyces</taxon>
    </lineage>
</organism>
<name>YAK0_YEAST</name>
<proteinExistence type="uncertain"/>